<keyword id="KW-0251">Elongation factor</keyword>
<keyword id="KW-0342">GTP-binding</keyword>
<keyword id="KW-0496">Mitochondrion</keyword>
<keyword id="KW-0547">Nucleotide-binding</keyword>
<keyword id="KW-0648">Protein biosynthesis</keyword>
<organism>
    <name type="scientific">Drosophila yakuba</name>
    <name type="common">Fruit fly</name>
    <dbReference type="NCBI Taxonomy" id="7245"/>
    <lineage>
        <taxon>Eukaryota</taxon>
        <taxon>Metazoa</taxon>
        <taxon>Ecdysozoa</taxon>
        <taxon>Arthropoda</taxon>
        <taxon>Hexapoda</taxon>
        <taxon>Insecta</taxon>
        <taxon>Pterygota</taxon>
        <taxon>Neoptera</taxon>
        <taxon>Endopterygota</taxon>
        <taxon>Diptera</taxon>
        <taxon>Brachycera</taxon>
        <taxon>Muscomorpha</taxon>
        <taxon>Ephydroidea</taxon>
        <taxon>Drosophilidae</taxon>
        <taxon>Drosophila</taxon>
        <taxon>Sophophora</taxon>
    </lineage>
</organism>
<accession>B4NZM7</accession>
<name>EFGM_DROYA</name>
<evidence type="ECO:0000250" key="1">
    <source>
        <dbReference type="UniProtKB" id="Q9VM33"/>
    </source>
</evidence>
<evidence type="ECO:0000255" key="2">
    <source>
        <dbReference type="HAMAP-Rule" id="MF_03061"/>
    </source>
</evidence>
<evidence type="ECO:0000305" key="3"/>
<feature type="chain" id="PRO_0000385554" description="Elongation factor G, mitochondrial">
    <location>
        <begin position="1"/>
        <end position="745"/>
    </location>
</feature>
<feature type="domain" description="tr-type G">
    <location>
        <begin position="40"/>
        <end position="317"/>
    </location>
</feature>
<feature type="binding site" evidence="2">
    <location>
        <begin position="49"/>
        <end position="56"/>
    </location>
    <ligand>
        <name>GTP</name>
        <dbReference type="ChEBI" id="CHEBI:37565"/>
    </ligand>
</feature>
<feature type="binding site" evidence="2">
    <location>
        <begin position="116"/>
        <end position="120"/>
    </location>
    <ligand>
        <name>GTP</name>
        <dbReference type="ChEBI" id="CHEBI:37565"/>
    </ligand>
</feature>
<feature type="binding site" evidence="2">
    <location>
        <begin position="170"/>
        <end position="173"/>
    </location>
    <ligand>
        <name>GTP</name>
        <dbReference type="ChEBI" id="CHEBI:37565"/>
    </ligand>
</feature>
<comment type="function">
    <text evidence="2">Mitochondrial GTPase that catalyzes the GTP-dependent ribosomal translocation step during translation elongation. During this step, the ribosome changes from the pre-translocational (PRE) to the post-translocational (POST) state as the newly formed A-site-bound peptidyl-tRNA and P-site-bound deacylated tRNA move to the P and E sites, respectively. Catalyzes the coordinated movement of the two tRNA molecules, the mRNA and conformational changes in the ribosome. Essential during development as it acts as a retrograde signal from mitochondria to the nucleus to slow down cell proliferation if mitochondrial energy output is low (By similarity).</text>
</comment>
<comment type="pathway">
    <text evidence="2">Protein biosynthesis; polypeptide chain elongation.</text>
</comment>
<comment type="subcellular location">
    <subcellularLocation>
        <location evidence="2">Mitochondrion</location>
    </subcellularLocation>
</comment>
<comment type="miscellaneous">
    <text evidence="2">This protein may be expected to contain an N-terminal transit peptide but none has been predicted.</text>
</comment>
<comment type="similarity">
    <text evidence="3">Belongs to the TRAFAC class translation factor GTPase superfamily. Classic translation factor GTPase family. EF-G/EF-2 subfamily.</text>
</comment>
<proteinExistence type="inferred from homology"/>
<protein>
    <recommendedName>
        <fullName evidence="2">Elongation factor G, mitochondrial</fullName>
        <shortName evidence="2">EF-Gmt</shortName>
    </recommendedName>
    <alternativeName>
        <fullName evidence="2">Elongation factor G 1, mitochondrial</fullName>
        <shortName evidence="2">mEF-G 1</shortName>
    </alternativeName>
    <alternativeName>
        <fullName evidence="2">Elongation factor G1</fullName>
    </alternativeName>
</protein>
<reference key="1">
    <citation type="journal article" date="2007" name="Nature">
        <title>Evolution of genes and genomes on the Drosophila phylogeny.</title>
        <authorList>
            <consortium name="Drosophila 12 genomes consortium"/>
        </authorList>
    </citation>
    <scope>NUCLEOTIDE SEQUENCE [LARGE SCALE GENOMIC DNA]</scope>
    <source>
        <strain>Tai18E2 / Tucson 14021-0261.01</strain>
    </source>
</reference>
<dbReference type="EMBL" id="CM000157">
    <property type="protein sequence ID" value="EDW87776.1"/>
    <property type="molecule type" value="Genomic_DNA"/>
</dbReference>
<dbReference type="SMR" id="B4NZM7"/>
<dbReference type="EnsemblMetazoa" id="FBtr0264888">
    <property type="protein sequence ID" value="FBpp0263380"/>
    <property type="gene ID" value="FBgn0235790"/>
</dbReference>
<dbReference type="EnsemblMetazoa" id="XM_002088028.4">
    <property type="protein sequence ID" value="XP_002088064.1"/>
    <property type="gene ID" value="LOC6526968"/>
</dbReference>
<dbReference type="GeneID" id="6526968"/>
<dbReference type="KEGG" id="dya:Dyak_GE18370"/>
<dbReference type="CTD" id="34004"/>
<dbReference type="eggNOG" id="KOG0465">
    <property type="taxonomic scope" value="Eukaryota"/>
</dbReference>
<dbReference type="HOGENOM" id="CLU_002794_4_0_1"/>
<dbReference type="OMA" id="GQFAKVQ"/>
<dbReference type="OrthoDB" id="198619at2759"/>
<dbReference type="PhylomeDB" id="B4NZM7"/>
<dbReference type="UniPathway" id="UPA00345"/>
<dbReference type="Proteomes" id="UP000002282">
    <property type="component" value="Chromosome 2L"/>
</dbReference>
<dbReference type="GO" id="GO:0005739">
    <property type="term" value="C:mitochondrion"/>
    <property type="evidence" value="ECO:0007669"/>
    <property type="project" value="UniProtKB-SubCell"/>
</dbReference>
<dbReference type="GO" id="GO:0005634">
    <property type="term" value="C:nucleus"/>
    <property type="evidence" value="ECO:0007669"/>
    <property type="project" value="EnsemblMetazoa"/>
</dbReference>
<dbReference type="GO" id="GO:0005525">
    <property type="term" value="F:GTP binding"/>
    <property type="evidence" value="ECO:0007669"/>
    <property type="project" value="UniProtKB-UniRule"/>
</dbReference>
<dbReference type="GO" id="GO:0003924">
    <property type="term" value="F:GTPase activity"/>
    <property type="evidence" value="ECO:0000250"/>
    <property type="project" value="UniProtKB"/>
</dbReference>
<dbReference type="GO" id="GO:0003746">
    <property type="term" value="F:translation elongation factor activity"/>
    <property type="evidence" value="ECO:0000250"/>
    <property type="project" value="UniProtKB"/>
</dbReference>
<dbReference type="GO" id="GO:0070125">
    <property type="term" value="P:mitochondrial translational elongation"/>
    <property type="evidence" value="ECO:0000250"/>
    <property type="project" value="UniProtKB"/>
</dbReference>
<dbReference type="CDD" id="cd01886">
    <property type="entry name" value="EF-G"/>
    <property type="match status" value="1"/>
</dbReference>
<dbReference type="CDD" id="cd16262">
    <property type="entry name" value="EFG_III"/>
    <property type="match status" value="1"/>
</dbReference>
<dbReference type="CDD" id="cd01434">
    <property type="entry name" value="EFG_mtEFG1_IV"/>
    <property type="match status" value="1"/>
</dbReference>
<dbReference type="CDD" id="cd04097">
    <property type="entry name" value="mtEFG1_C"/>
    <property type="match status" value="1"/>
</dbReference>
<dbReference type="CDD" id="cd04091">
    <property type="entry name" value="mtEFG1_II_like"/>
    <property type="match status" value="1"/>
</dbReference>
<dbReference type="FunFam" id="3.30.230.10:FF:000003">
    <property type="entry name" value="Elongation factor G"/>
    <property type="match status" value="1"/>
</dbReference>
<dbReference type="FunFam" id="3.30.70.240:FF:000001">
    <property type="entry name" value="Elongation factor G"/>
    <property type="match status" value="1"/>
</dbReference>
<dbReference type="FunFam" id="3.30.70.870:FF:000001">
    <property type="entry name" value="Elongation factor G"/>
    <property type="match status" value="1"/>
</dbReference>
<dbReference type="FunFam" id="2.40.30.10:FF:000022">
    <property type="entry name" value="Elongation factor G, mitochondrial"/>
    <property type="match status" value="1"/>
</dbReference>
<dbReference type="FunFam" id="3.40.50.300:FF:000539">
    <property type="entry name" value="Elongation factor G, mitochondrial"/>
    <property type="match status" value="1"/>
</dbReference>
<dbReference type="Gene3D" id="3.30.230.10">
    <property type="match status" value="1"/>
</dbReference>
<dbReference type="Gene3D" id="3.30.70.240">
    <property type="match status" value="1"/>
</dbReference>
<dbReference type="Gene3D" id="3.30.70.870">
    <property type="entry name" value="Elongation Factor G (Translational Gtpase), domain 3"/>
    <property type="match status" value="1"/>
</dbReference>
<dbReference type="Gene3D" id="3.40.50.300">
    <property type="entry name" value="P-loop containing nucleotide triphosphate hydrolases"/>
    <property type="match status" value="1"/>
</dbReference>
<dbReference type="Gene3D" id="2.40.30.10">
    <property type="entry name" value="Translation factors"/>
    <property type="match status" value="1"/>
</dbReference>
<dbReference type="HAMAP" id="MF_00054_B">
    <property type="entry name" value="EF_G_EF_2_B"/>
    <property type="match status" value="1"/>
</dbReference>
<dbReference type="InterPro" id="IPR041095">
    <property type="entry name" value="EFG_II"/>
</dbReference>
<dbReference type="InterPro" id="IPR009022">
    <property type="entry name" value="EFG_III"/>
</dbReference>
<dbReference type="InterPro" id="IPR035647">
    <property type="entry name" value="EFG_III/V"/>
</dbReference>
<dbReference type="InterPro" id="IPR047872">
    <property type="entry name" value="EFG_IV"/>
</dbReference>
<dbReference type="InterPro" id="IPR035649">
    <property type="entry name" value="EFG_V"/>
</dbReference>
<dbReference type="InterPro" id="IPR000640">
    <property type="entry name" value="EFG_V-like"/>
</dbReference>
<dbReference type="InterPro" id="IPR004161">
    <property type="entry name" value="EFTu-like_2"/>
</dbReference>
<dbReference type="InterPro" id="IPR031157">
    <property type="entry name" value="G_TR_CS"/>
</dbReference>
<dbReference type="InterPro" id="IPR027417">
    <property type="entry name" value="P-loop_NTPase"/>
</dbReference>
<dbReference type="InterPro" id="IPR020568">
    <property type="entry name" value="Ribosomal_Su5_D2-typ_SF"/>
</dbReference>
<dbReference type="InterPro" id="IPR014721">
    <property type="entry name" value="Ribsml_uS5_D2-typ_fold_subgr"/>
</dbReference>
<dbReference type="InterPro" id="IPR005225">
    <property type="entry name" value="Small_GTP-bd"/>
</dbReference>
<dbReference type="InterPro" id="IPR000795">
    <property type="entry name" value="T_Tr_GTP-bd_dom"/>
</dbReference>
<dbReference type="InterPro" id="IPR009000">
    <property type="entry name" value="Transl_B-barrel_sf"/>
</dbReference>
<dbReference type="InterPro" id="IPR004540">
    <property type="entry name" value="Transl_elong_EFG/EF2"/>
</dbReference>
<dbReference type="InterPro" id="IPR005517">
    <property type="entry name" value="Transl_elong_EFG/EF2_IV"/>
</dbReference>
<dbReference type="NCBIfam" id="TIGR00484">
    <property type="entry name" value="EF-G"/>
    <property type="match status" value="1"/>
</dbReference>
<dbReference type="NCBIfam" id="NF009381">
    <property type="entry name" value="PRK12740.1-5"/>
    <property type="match status" value="1"/>
</dbReference>
<dbReference type="NCBIfam" id="TIGR00231">
    <property type="entry name" value="small_GTP"/>
    <property type="match status" value="1"/>
</dbReference>
<dbReference type="PANTHER" id="PTHR43636">
    <property type="entry name" value="ELONGATION FACTOR G, MITOCHONDRIAL"/>
    <property type="match status" value="1"/>
</dbReference>
<dbReference type="PANTHER" id="PTHR43636:SF2">
    <property type="entry name" value="ELONGATION FACTOR G, MITOCHONDRIAL"/>
    <property type="match status" value="1"/>
</dbReference>
<dbReference type="Pfam" id="PF00679">
    <property type="entry name" value="EFG_C"/>
    <property type="match status" value="1"/>
</dbReference>
<dbReference type="Pfam" id="PF14492">
    <property type="entry name" value="EFG_III"/>
    <property type="match status" value="1"/>
</dbReference>
<dbReference type="Pfam" id="PF03764">
    <property type="entry name" value="EFG_IV"/>
    <property type="match status" value="1"/>
</dbReference>
<dbReference type="Pfam" id="PF00009">
    <property type="entry name" value="GTP_EFTU"/>
    <property type="match status" value="1"/>
</dbReference>
<dbReference type="Pfam" id="PF03144">
    <property type="entry name" value="GTP_EFTU_D2"/>
    <property type="match status" value="1"/>
</dbReference>
<dbReference type="PRINTS" id="PR00315">
    <property type="entry name" value="ELONGATNFCT"/>
</dbReference>
<dbReference type="SMART" id="SM00838">
    <property type="entry name" value="EFG_C"/>
    <property type="match status" value="1"/>
</dbReference>
<dbReference type="SMART" id="SM00889">
    <property type="entry name" value="EFG_IV"/>
    <property type="match status" value="1"/>
</dbReference>
<dbReference type="SUPFAM" id="SSF54980">
    <property type="entry name" value="EF-G C-terminal domain-like"/>
    <property type="match status" value="2"/>
</dbReference>
<dbReference type="SUPFAM" id="SSF52540">
    <property type="entry name" value="P-loop containing nucleoside triphosphate hydrolases"/>
    <property type="match status" value="1"/>
</dbReference>
<dbReference type="SUPFAM" id="SSF54211">
    <property type="entry name" value="Ribosomal protein S5 domain 2-like"/>
    <property type="match status" value="1"/>
</dbReference>
<dbReference type="SUPFAM" id="SSF50447">
    <property type="entry name" value="Translation proteins"/>
    <property type="match status" value="1"/>
</dbReference>
<dbReference type="PROSITE" id="PS00301">
    <property type="entry name" value="G_TR_1"/>
    <property type="match status" value="1"/>
</dbReference>
<dbReference type="PROSITE" id="PS51722">
    <property type="entry name" value="G_TR_2"/>
    <property type="match status" value="1"/>
</dbReference>
<sequence length="745" mass="83573">MSLITRLLTGNITLRRRAMESLGKAGYSSHAKFSEHKPIERIRNIGISAHIDSGKTTLTERILFYTGRIAEMHEVRGKDNVGATMDSMELERQRGITIQSAATYTLWKDTNINIIDTPGHVDFTVEVERALRVLDGAVLVLCAVGGVQSQTLTVNRQMKRYNVPCLAFINKLDRLGSNPYRVLSQMRSKMNHNAAFIQLPIGVESNCKGIVDLVREKAIYFEGEHGMDIRLDEIPQDMRVESLERRQELIEHLSNADETLGELFLEEKPFTEDDIKAALRRTCINRTFTPVLVGTALKNKGVQPLLDAVLDYLPNPGEVENLGFIEKEGQDPEKVVLNPARDGKDPFVGLAFKLEAGRFGQLTYLRCYQGVLRKGDNIFNARTNKKVRIARLVRLHSNQMEDVNEVYAGDIFALFGVDCASGDTFTTNPKNNLSMESIFVPEPVVSMAIKPNNTKDRDNFSKAIARFTKEDPTFHFFFDNDVKETLVSGMGELHLEIYAQRMEREYGCPVTLGKPKVAFRETLVGPCEFDYLHKKQSGGSGQYARIIGVMEPLPPTQNTLLEFVDETVGTNVPKQFVPGVEKGYREMAEKGMLSGHKLSGIRFRLQDGGHHIVDSSELAFMLASHGAIKEVFQNGSWQILEPIMLVEVTAPEEFQGAVMGHLSKRHGIITGTEGTEGWFTVYAEVPLNDMFGYAGELRSSTQGKGEFTMEYSRYSPCLPDVQDQIVRQYQESQGLAQPDKKKKKN</sequence>
<gene>
    <name evidence="1" type="primary">mEFG1</name>
    <name evidence="1" type="synonym">ico</name>
    <name type="ORF">GE18370</name>
</gene>